<accession>Q07891</accession>
<dbReference type="EMBL" id="L19142">
    <property type="protein sequence ID" value="AAA03576.1"/>
    <property type="molecule type" value="mRNA"/>
</dbReference>
<dbReference type="PIR" id="A48592">
    <property type="entry name" value="A48592"/>
</dbReference>
<dbReference type="RefSeq" id="NP_001233748.1">
    <property type="nucleotide sequence ID" value="NM_001246819.1"/>
</dbReference>
<dbReference type="SMR" id="Q07891"/>
<dbReference type="MEROPS" id="M28.972"/>
<dbReference type="GlyCosmos" id="Q07891">
    <property type="glycosylation" value="5 sites, No reported glycans"/>
</dbReference>
<dbReference type="iPTMnet" id="Q07891"/>
<dbReference type="PaxDb" id="10029-NP_001233748.1"/>
<dbReference type="GeneID" id="100689395"/>
<dbReference type="KEGG" id="cge:100689395"/>
<dbReference type="CTD" id="7037"/>
<dbReference type="eggNOG" id="KOG2195">
    <property type="taxonomic scope" value="Eukaryota"/>
</dbReference>
<dbReference type="OrthoDB" id="5841748at2759"/>
<dbReference type="Proteomes" id="UP000694386">
    <property type="component" value="Unplaced"/>
</dbReference>
<dbReference type="Proteomes" id="UP001108280">
    <property type="component" value="Chromosome 4"/>
</dbReference>
<dbReference type="GO" id="GO:0009897">
    <property type="term" value="C:external side of plasma membrane"/>
    <property type="evidence" value="ECO:0007669"/>
    <property type="project" value="TreeGrafter"/>
</dbReference>
<dbReference type="GO" id="GO:0042470">
    <property type="term" value="C:melanosome"/>
    <property type="evidence" value="ECO:0007669"/>
    <property type="project" value="UniProtKB-SubCell"/>
</dbReference>
<dbReference type="GO" id="GO:0055037">
    <property type="term" value="C:recycling endosome"/>
    <property type="evidence" value="ECO:0000314"/>
    <property type="project" value="MGI"/>
</dbReference>
<dbReference type="GO" id="GO:0004998">
    <property type="term" value="F:transferrin receptor activity"/>
    <property type="evidence" value="ECO:0000250"/>
    <property type="project" value="UniProtKB"/>
</dbReference>
<dbReference type="GO" id="GO:0006879">
    <property type="term" value="P:intracellular iron ion homeostasis"/>
    <property type="evidence" value="ECO:0007669"/>
    <property type="project" value="TreeGrafter"/>
</dbReference>
<dbReference type="GO" id="GO:0030890">
    <property type="term" value="P:positive regulation of B cell proliferation"/>
    <property type="evidence" value="ECO:0000250"/>
    <property type="project" value="UniProtKB"/>
</dbReference>
<dbReference type="GO" id="GO:0045830">
    <property type="term" value="P:positive regulation of isotype switching"/>
    <property type="evidence" value="ECO:0000250"/>
    <property type="project" value="UniProtKB"/>
</dbReference>
<dbReference type="GO" id="GO:0042102">
    <property type="term" value="P:positive regulation of T cell proliferation"/>
    <property type="evidence" value="ECO:0000250"/>
    <property type="project" value="UniProtKB"/>
</dbReference>
<dbReference type="GO" id="GO:0031623">
    <property type="term" value="P:receptor internalization"/>
    <property type="evidence" value="ECO:0000250"/>
    <property type="project" value="UniProtKB"/>
</dbReference>
<dbReference type="GO" id="GO:0033572">
    <property type="term" value="P:transferrin transport"/>
    <property type="evidence" value="ECO:0000250"/>
    <property type="project" value="UniProtKB"/>
</dbReference>
<dbReference type="CDD" id="cd09848">
    <property type="entry name" value="M28_TfR"/>
    <property type="match status" value="1"/>
</dbReference>
<dbReference type="CDD" id="cd02128">
    <property type="entry name" value="PA_TfR"/>
    <property type="match status" value="1"/>
</dbReference>
<dbReference type="FunFam" id="1.20.930.40:FF:000002">
    <property type="entry name" value="Transferrin receptor protein 1"/>
    <property type="match status" value="1"/>
</dbReference>
<dbReference type="FunFam" id="3.40.630.10:FF:000045">
    <property type="entry name" value="Transferrin receptor protein 1"/>
    <property type="match status" value="1"/>
</dbReference>
<dbReference type="FunFam" id="3.50.30.30:FF:000010">
    <property type="entry name" value="Transferrin receptor protein 1"/>
    <property type="match status" value="1"/>
</dbReference>
<dbReference type="Gene3D" id="3.50.30.30">
    <property type="match status" value="1"/>
</dbReference>
<dbReference type="Gene3D" id="1.20.930.40">
    <property type="entry name" value="Transferrin receptor-like, dimerisation domain"/>
    <property type="match status" value="1"/>
</dbReference>
<dbReference type="Gene3D" id="3.40.630.10">
    <property type="entry name" value="Zn peptidases"/>
    <property type="match status" value="1"/>
</dbReference>
<dbReference type="InterPro" id="IPR046450">
    <property type="entry name" value="PA_dom_sf"/>
</dbReference>
<dbReference type="InterPro" id="IPR003137">
    <property type="entry name" value="PA_domain"/>
</dbReference>
<dbReference type="InterPro" id="IPR007484">
    <property type="entry name" value="Peptidase_M28"/>
</dbReference>
<dbReference type="InterPro" id="IPR039373">
    <property type="entry name" value="Peptidase_M28B"/>
</dbReference>
<dbReference type="InterPro" id="IPR007365">
    <property type="entry name" value="TFR-like_dimer_dom"/>
</dbReference>
<dbReference type="InterPro" id="IPR036757">
    <property type="entry name" value="TFR-like_dimer_dom_sf"/>
</dbReference>
<dbReference type="InterPro" id="IPR037324">
    <property type="entry name" value="TfR1/2_PA"/>
</dbReference>
<dbReference type="PANTHER" id="PTHR10404">
    <property type="entry name" value="N-ACETYLATED-ALPHA-LINKED ACIDIC DIPEPTIDASE"/>
    <property type="match status" value="1"/>
</dbReference>
<dbReference type="PANTHER" id="PTHR10404:SF26">
    <property type="entry name" value="TRANSFERRIN RECEPTOR PROTEIN 1"/>
    <property type="match status" value="1"/>
</dbReference>
<dbReference type="Pfam" id="PF02225">
    <property type="entry name" value="PA"/>
    <property type="match status" value="1"/>
</dbReference>
<dbReference type="Pfam" id="PF04389">
    <property type="entry name" value="Peptidase_M28"/>
    <property type="match status" value="1"/>
</dbReference>
<dbReference type="Pfam" id="PF04253">
    <property type="entry name" value="TFR_dimer"/>
    <property type="match status" value="1"/>
</dbReference>
<dbReference type="SUPFAM" id="SSF52025">
    <property type="entry name" value="PA domain"/>
    <property type="match status" value="1"/>
</dbReference>
<dbReference type="SUPFAM" id="SSF47672">
    <property type="entry name" value="Transferrin receptor-like dimerisation domain"/>
    <property type="match status" value="1"/>
</dbReference>
<dbReference type="SUPFAM" id="SSF53187">
    <property type="entry name" value="Zn-dependent exopeptidases"/>
    <property type="match status" value="1"/>
</dbReference>
<organism>
    <name type="scientific">Cricetulus griseus</name>
    <name type="common">Chinese hamster</name>
    <name type="synonym">Cricetulus barabensis griseus</name>
    <dbReference type="NCBI Taxonomy" id="10029"/>
    <lineage>
        <taxon>Eukaryota</taxon>
        <taxon>Metazoa</taxon>
        <taxon>Chordata</taxon>
        <taxon>Craniata</taxon>
        <taxon>Vertebrata</taxon>
        <taxon>Euteleostomi</taxon>
        <taxon>Mammalia</taxon>
        <taxon>Eutheria</taxon>
        <taxon>Euarchontoglires</taxon>
        <taxon>Glires</taxon>
        <taxon>Rodentia</taxon>
        <taxon>Myomorpha</taxon>
        <taxon>Muroidea</taxon>
        <taxon>Cricetidae</taxon>
        <taxon>Cricetinae</taxon>
        <taxon>Cricetulus</taxon>
    </lineage>
</organism>
<protein>
    <recommendedName>
        <fullName>Transferrin receptor protein 1</fullName>
        <shortName>TR</shortName>
        <shortName>TfR</shortName>
        <shortName>TfR1</shortName>
        <shortName>Trfr</shortName>
    </recommendedName>
    <cdAntigenName>CD71</cdAntigenName>
</protein>
<name>TFR1_CRIGR</name>
<evidence type="ECO:0000250" key="1"/>
<evidence type="ECO:0000250" key="2">
    <source>
        <dbReference type="UniProtKB" id="P02786"/>
    </source>
</evidence>
<evidence type="ECO:0000250" key="3">
    <source>
        <dbReference type="UniProtKB" id="Q62351"/>
    </source>
</evidence>
<evidence type="ECO:0000255" key="4"/>
<evidence type="ECO:0000305" key="5"/>
<reference key="1">
    <citation type="journal article" date="1993" name="J. Biol. Chem.">
        <title>YTRF is the conserved internalization signal of the transferrin receptor, and a second YTRF signal at position 31-34 enhances endocytosis.</title>
        <authorList>
            <person name="Collawn J.F."/>
            <person name="Lai A."/>
            <person name="Domingo D.L."/>
            <person name="Fitch M."/>
            <person name="Hatton S."/>
            <person name="Trowbridge I.S."/>
        </authorList>
    </citation>
    <scope>NUCLEOTIDE SEQUENCE [MRNA]</scope>
    <source>
        <tissue>Ovary</tissue>
    </source>
</reference>
<reference key="2">
    <citation type="journal article" date="1990" name="Biochem. J.">
        <title>A point mutation in the cytoplasmic domain of the transferrin receptor inhibits endocytosis.</title>
        <authorList>
            <person name="Alvarez E."/>
            <person name="Girones N."/>
            <person name="Davis R.J."/>
        </authorList>
    </citation>
    <scope>PRELIMINARY PARTIAL NUCLEOTIDE SEQUENCE</scope>
</reference>
<proteinExistence type="evidence at transcript level"/>
<keyword id="KW-1003">Cell membrane</keyword>
<keyword id="KW-1015">Disulfide bond</keyword>
<keyword id="KW-0254">Endocytosis</keyword>
<keyword id="KW-0325">Glycoprotein</keyword>
<keyword id="KW-0449">Lipoprotein</keyword>
<keyword id="KW-0472">Membrane</keyword>
<keyword id="KW-0564">Palmitate</keyword>
<keyword id="KW-0597">Phosphoprotein</keyword>
<keyword id="KW-0675">Receptor</keyword>
<keyword id="KW-0735">Signal-anchor</keyword>
<keyword id="KW-0812">Transmembrane</keyword>
<keyword id="KW-1133">Transmembrane helix</keyword>
<gene>
    <name type="primary">TFRC</name>
</gene>
<comment type="function">
    <text evidence="2 3">Cellular uptake of iron occurs via receptor-mediated endocytosis of ligand-occupied transferrin receptor into specialized endosomes (By similarity). Endosomal acidification leads to iron release. The apotransferrin-receptor complex is then recycled to the cell surface with a return to neutral pH and the concomitant loss of affinity of apotransferrin for its receptor. Transferrin receptor is necessary for development of erythrocytes and the nervous system (By similarity). Positively regulates T and B cell proliferation through iron uptake (By similarity). Acts as a lipid sensor that regulates mitochondrial fusion by regulating activation of the JNK pathway (By similarity). When dietary levels of stearate (C18:0) are low, promotes activation of the JNK pathway, resulting in HUWE1-mediated ubiquitination and subsequent degradation of the mitofusin MFN2 and inhibition of mitochondrial fusion (By similarity). When dietary levels of stearate (C18:0) are high, TFRC stearoylation inhibits activation of the JNK pathway and thus degradation of the mitofusin MFN2 (By similarity). Mediates uptake of NICOL1 into fibroblasts where it may regulate extracellular matrix production (By similarity).</text>
</comment>
<comment type="subunit">
    <text evidence="1 2">Homodimer; disulfide-linked. Binds one transferrin molecule per subunit. Interacts with SH3BP4 (By similarity). Interacts with STEAP3; facilitates TFRC endocytosis in erythroid precursor cells (By similarity).</text>
</comment>
<comment type="subcellular location">
    <subcellularLocation>
        <location evidence="2">Cell membrane</location>
        <topology evidence="2">Single-pass type II membrane protein</topology>
    </subcellularLocation>
    <subcellularLocation>
        <location evidence="2">Melanosome</location>
    </subcellularLocation>
</comment>
<comment type="PTM">
    <text evidence="2">Stearoylated by ZDHHC6 which inhibits TFRC-mediated activation of the JNK pathway and promotes mitochondrial fragmentation (By similarity). Stearoylation does not affect iron uptake (By similarity).</text>
</comment>
<comment type="PTM">
    <text evidence="1">N- and O-glycosylated, phosphorylated and palmitoylated.</text>
</comment>
<comment type="similarity">
    <text evidence="5">Belongs to the peptidase M28 family. M28B subfamily.</text>
</comment>
<feature type="chain" id="PRO_0000174130" description="Transferrin receptor protein 1">
    <location>
        <begin position="1"/>
        <end position="757"/>
    </location>
</feature>
<feature type="topological domain" description="Cytoplasmic" evidence="4">
    <location>
        <begin position="1"/>
        <end position="67"/>
    </location>
</feature>
<feature type="transmembrane region" description="Helical; Signal-anchor for type II membrane protein" evidence="4">
    <location>
        <begin position="68"/>
        <end position="88"/>
    </location>
</feature>
<feature type="topological domain" description="Extracellular" evidence="4">
    <location>
        <begin position="89"/>
        <end position="757"/>
    </location>
</feature>
<feature type="domain" description="PA">
    <location>
        <begin position="220"/>
        <end position="310"/>
    </location>
</feature>
<feature type="region of interest" description="Mediates interaction with SH3BP4" evidence="1">
    <location>
        <begin position="1"/>
        <end position="67"/>
    </location>
</feature>
<feature type="region of interest" description="Ligand-binding" evidence="1">
    <location>
        <begin position="566"/>
        <end position="757"/>
    </location>
</feature>
<feature type="short sequence motif" description="Endocytosis signal">
    <location>
        <begin position="20"/>
        <end position="23"/>
    </location>
</feature>
<feature type="short sequence motif" description="Stop-transfer sequence">
    <location>
        <begin position="58"/>
        <end position="61"/>
    </location>
</feature>
<feature type="short sequence motif" description="Cell attachment site" evidence="4">
    <location>
        <begin position="643"/>
        <end position="645"/>
    </location>
</feature>
<feature type="modified residue" description="Phosphoserine" evidence="2">
    <location>
        <position position="10"/>
    </location>
</feature>
<feature type="modified residue" description="Phosphoserine" evidence="3">
    <location>
        <position position="19"/>
    </location>
</feature>
<feature type="modified residue" description="Phosphotyrosine" evidence="2">
    <location>
        <position position="20"/>
    </location>
</feature>
<feature type="modified residue" description="Phosphothreonine" evidence="2">
    <location>
        <position position="21"/>
    </location>
</feature>
<feature type="modified residue" description="Phosphoserine" evidence="2">
    <location>
        <position position="24"/>
    </location>
</feature>
<feature type="lipid moiety-binding region" description="S-palmitoyl cysteine" evidence="1">
    <location>
        <position position="67"/>
    </location>
</feature>
<feature type="glycosylation site" description="O-linked (GalNAc...) threonine" evidence="1">
    <location>
        <position position="103"/>
    </location>
</feature>
<feature type="glycosylation site" description="N-linked (GlcNAc...) asparagine" evidence="2">
    <location>
        <position position="248"/>
    </location>
</feature>
<feature type="glycosylation site" description="N-linked (GlcNAc...) asparagine" evidence="2">
    <location>
        <position position="314"/>
    </location>
</feature>
<feature type="glycosylation site" description="N-linked (GlcNAc...) asparagine" evidence="4">
    <location>
        <position position="719"/>
    </location>
</feature>
<feature type="glycosylation site" description="N-linked (GlcNAc...) asparagine" evidence="2">
    <location>
        <position position="724"/>
    </location>
</feature>
<feature type="disulfide bond" description="Interchain" evidence="1">
    <location>
        <position position="89"/>
    </location>
</feature>
<feature type="disulfide bond" description="Interchain" evidence="1">
    <location>
        <position position="97"/>
    </location>
</feature>
<feature type="sequence conflict" description="In Ref. 2." evidence="5" ref="2">
    <original>Y</original>
    <variation>T</variation>
    <location>
        <position position="20"/>
    </location>
</feature>
<sequence length="757" mass="85081">MMDQARSAISNLFGGEPLSYTRFSLARQVDGDNSHVEMKLAVDEEENTDNNMKASVRKHRRLNGRLCFGTIAVVIFFLIGFMIGYLGYCKRTEQKDCVRLAETETGNSEIIQEENIPQSSRLYWADLKKLLSEKLDAIEFTDTIKQLSQTSREAGSQKDENLAYYIENQFRDFKLSKVWRDEHYVKIQVKGSAAQNAVTIINVNGDSDLVENPGGYVAYSKATTVSGKLIHANFGTKKDFEDLKYPVNGSLVIVRAGKITFAEKVANAQSFNAIGVLIYMDQTKFPVVEAELSLFGHAHLGTGDPYTPGFPSFNHTQFPPSQSSGLPSIPVQTISRKAAEKLFQNMETNCPPSWNTDSLCKLESSQGINVNLSVNNVLKETRILNIFGVIKGFEEPDRYIVVGAQRDAWGPGAAKSSVGTGLLLKLAQAFSDMVSRGGFKPSRSIIFASWSAGDFGAVGATEWLEGYLSSLHLKAFTYINLDKVVLGTRNFKVSASPLLYTLIEKTMQDVRHPIDGKPLYRDSNWISKVEDLSLDNAAFPFLAYSGIPAVSFWFCENEDYPYLDTNLDTYEKLIQKVPQLNKMVRAAAEVAGQFIIKLTHDIELNLDYDMYNNKILSFVKELNQFRADIKAMGLSLQWLYSARGDFFRATSRLTTDFHNAEKTNRFVVREINNRIMKVEYHFLSPYVSPRESPFRHIFWGSGSHTLTALVENLKLRQKNSSAFNETLFRNQLALATWTIQGVANALSGDIWDIDNEF</sequence>